<organism>
    <name type="scientific">Cavia porcellus</name>
    <name type="common">Guinea pig</name>
    <dbReference type="NCBI Taxonomy" id="10141"/>
    <lineage>
        <taxon>Eukaryota</taxon>
        <taxon>Metazoa</taxon>
        <taxon>Chordata</taxon>
        <taxon>Craniata</taxon>
        <taxon>Vertebrata</taxon>
        <taxon>Euteleostomi</taxon>
        <taxon>Mammalia</taxon>
        <taxon>Eutheria</taxon>
        <taxon>Euarchontoglires</taxon>
        <taxon>Glires</taxon>
        <taxon>Rodentia</taxon>
        <taxon>Hystricomorpha</taxon>
        <taxon>Caviidae</taxon>
        <taxon>Cavia</taxon>
    </lineage>
</organism>
<protein>
    <recommendedName>
        <fullName>Prostaglandin reductase 1</fullName>
        <shortName>PRG-1</shortName>
    </recommendedName>
    <alternativeName>
        <fullName evidence="7">15-oxoprostaglandin 13-reductase</fullName>
        <ecNumber evidence="5">1.3.1.48</ecNumber>
    </alternativeName>
    <alternativeName>
        <fullName evidence="1">Dithiolethione-inducible gene 1 protein</fullName>
        <shortName evidence="1">D3T-inducible gene 1 protein</shortName>
        <shortName evidence="1">DIG-1</shortName>
    </alternativeName>
    <alternativeName>
        <fullName evidence="7">Leukotriene B4 12-hydroxydehydrogenase</fullName>
    </alternativeName>
    <alternativeName>
        <fullName evidence="2">NAD(P)H-dependent alkenal/one oxidoreductase</fullName>
        <ecNumber evidence="2">1.3.1.74</ecNumber>
    </alternativeName>
</protein>
<name>PTGR1_CAVPO</name>
<sequence length="329" mass="35730">MVKAKSWTLKKHFQGKPTQSDFELKTVELPPLKNGEVLLEALFLSVDPYMRIASKRLKEGAVMMGQQVARVVESKNSAFPAGSIVLAQSGWTTHFISDGKGLEKLLTEWPDKLPLSLALGTIGMPGLTAYFGLLEVCGVKGGETVLVSAAAGAVGSVVGQIAKLKGCKVVGAAGSDEKIAYLKQIGFDAAFNYKTVNSLEEALKKASPDGYDCYFDNVGGEFLNTVLSQMKDFGKIAICGAISVYNRMDQLPPGPSPESIIYKQLRIEGFIVYRWQGDVREKALRDLMKWVLEGKIQYHEHVTKGFENMPAAFIEMLNGANLGKAVVTA</sequence>
<gene>
    <name type="primary">Ptgr1</name>
    <name type="synonym">Ltb4dh</name>
</gene>
<keyword id="KW-0002">3D-structure</keyword>
<keyword id="KW-0007">Acetylation</keyword>
<keyword id="KW-0963">Cytoplasm</keyword>
<keyword id="KW-0276">Fatty acid metabolism</keyword>
<keyword id="KW-0379">Hydroxylation</keyword>
<keyword id="KW-0443">Lipid metabolism</keyword>
<keyword id="KW-0521">NADP</keyword>
<keyword id="KW-0560">Oxidoreductase</keyword>
<keyword id="KW-0597">Phosphoprotein</keyword>
<keyword id="KW-0644">Prostaglandin metabolism</keyword>
<keyword id="KW-1185">Reference proteome</keyword>
<evidence type="ECO:0000250" key="1">
    <source>
        <dbReference type="UniProtKB" id="P97584"/>
    </source>
</evidence>
<evidence type="ECO:0000250" key="2">
    <source>
        <dbReference type="UniProtKB" id="Q14914"/>
    </source>
</evidence>
<evidence type="ECO:0000250" key="3">
    <source>
        <dbReference type="UniProtKB" id="Q29073"/>
    </source>
</evidence>
<evidence type="ECO:0000250" key="4">
    <source>
        <dbReference type="UniProtKB" id="Q91YR9"/>
    </source>
</evidence>
<evidence type="ECO:0000269" key="5">
    <source>
    </source>
</evidence>
<evidence type="ECO:0000269" key="6">
    <source>
    </source>
</evidence>
<evidence type="ECO:0000303" key="7">
    <source>
    </source>
</evidence>
<evidence type="ECO:0000305" key="8"/>
<evidence type="ECO:0000305" key="9">
    <source>
    </source>
</evidence>
<evidence type="ECO:0007829" key="10">
    <source>
        <dbReference type="PDB" id="1V3T"/>
    </source>
</evidence>
<evidence type="ECO:0007829" key="11">
    <source>
        <dbReference type="PDB" id="1V3U"/>
    </source>
</evidence>
<evidence type="ECO:0007829" key="12">
    <source>
        <dbReference type="PDB" id="1V3V"/>
    </source>
</evidence>
<comment type="function">
    <text evidence="1 2 3 5">NAD(P)H-dependent oxidoreductase involved in metabolic inactivation of pro- and anti-inflammatory eicosanoids: prostaglandins (PG), leukotrienes (LT) and lipoxins (LX) (PubMed:11733004). Catalyzes with high efficiency the reduction of the 13,14 double bond of 15-oxoPGs, including 15-oxo-PGE1, 15-oxo-PGE2, 15-oxo-PGF1-alpha and 15-oxo-PGF2-alpha (By similarity) (PubMed:11733004). Catalyzes with lower efficiency the oxidation of the hydroxyl group at C12 of LTB4 and its derivatives, converting them into biologically less active 12-oxo-LTB4 metabolites (By similarity) (PubMed:11733004). Reduces 15-oxo-LXA4 to 13,14 dihydro-15-oxo-LXA4, enhancing neutrophil recruitment at the inflammatory site (By similarity). Plays a role in metabolic detoxification of alkenals and ketones. Reduces alpha,beta-unsaturated alkenals and ketones, particularly those with medium-chain length, showing highest affinity toward (2E)-decenal and (3E)-3-nonen-2-one (By similarity). May inactivate 4-hydroxy-2-nonenal, a cytotoxic lipid constituent of oxidized low-density lipoprotein particles (By similarity).</text>
</comment>
<comment type="catalytic activity">
    <reaction evidence="2">
        <text>13,14-dihydro-15-oxo-prostaglandin E1 + NADP(+) = 15-oxoprostaglandin E1 + NADPH + H(+)</text>
        <dbReference type="Rhea" id="RHEA:50584"/>
        <dbReference type="ChEBI" id="CHEBI:15378"/>
        <dbReference type="ChEBI" id="CHEBI:57401"/>
        <dbReference type="ChEBI" id="CHEBI:57783"/>
        <dbReference type="ChEBI" id="CHEBI:58349"/>
        <dbReference type="ChEBI" id="CHEBI:133408"/>
    </reaction>
    <physiologicalReaction direction="right-to-left" evidence="2">
        <dbReference type="Rhea" id="RHEA:50586"/>
    </physiologicalReaction>
</comment>
<comment type="catalytic activity">
    <reaction evidence="5">
        <text>13,14-dihydro-15-oxo-prostaglandin E2 + NAD(+) = 15-oxoprostaglandin E2 + NADH + H(+)</text>
        <dbReference type="Rhea" id="RHEA:11916"/>
        <dbReference type="ChEBI" id="CHEBI:15378"/>
        <dbReference type="ChEBI" id="CHEBI:57400"/>
        <dbReference type="ChEBI" id="CHEBI:57402"/>
        <dbReference type="ChEBI" id="CHEBI:57540"/>
        <dbReference type="ChEBI" id="CHEBI:57945"/>
        <dbReference type="EC" id="1.3.1.48"/>
    </reaction>
    <physiologicalReaction direction="right-to-left" evidence="9">
        <dbReference type="Rhea" id="RHEA:11918"/>
    </physiologicalReaction>
</comment>
<comment type="catalytic activity">
    <reaction evidence="2">
        <text>13,14-dihydro-15-oxo-prostaglandin F1alpha + NADP(+) = 15-oxoprostaglandin F1alpha + NADPH + H(+)</text>
        <dbReference type="Rhea" id="RHEA:50592"/>
        <dbReference type="ChEBI" id="CHEBI:15378"/>
        <dbReference type="ChEBI" id="CHEBI:57783"/>
        <dbReference type="ChEBI" id="CHEBI:58349"/>
        <dbReference type="ChEBI" id="CHEBI:79072"/>
        <dbReference type="ChEBI" id="CHEBI:133411"/>
    </reaction>
    <physiologicalReaction direction="right-to-left" evidence="2">
        <dbReference type="Rhea" id="RHEA:50594"/>
    </physiologicalReaction>
</comment>
<comment type="catalytic activity">
    <reaction evidence="2">
        <text>13,14-dihydro-15-oxo-PGF2alpha + NADP(+) = 15-oxoprostaglandin F2alpha + NADPH + H(+)</text>
        <dbReference type="Rhea" id="RHEA:50588"/>
        <dbReference type="ChEBI" id="CHEBI:15378"/>
        <dbReference type="ChEBI" id="CHEBI:57783"/>
        <dbReference type="ChEBI" id="CHEBI:58349"/>
        <dbReference type="ChEBI" id="CHEBI:133374"/>
        <dbReference type="ChEBI" id="CHEBI:133409"/>
    </reaction>
    <physiologicalReaction direction="right-to-left" evidence="2">
        <dbReference type="Rhea" id="RHEA:50590"/>
    </physiologicalReaction>
</comment>
<comment type="catalytic activity">
    <reaction evidence="5">
        <text>leukotriene B4 + NADP(+) = 12-oxo-leukotriene B4 + NADPH + H(+)</text>
        <dbReference type="Rhea" id="RHEA:50608"/>
        <dbReference type="ChEBI" id="CHEBI:15378"/>
        <dbReference type="ChEBI" id="CHEBI:57461"/>
        <dbReference type="ChEBI" id="CHEBI:57783"/>
        <dbReference type="ChEBI" id="CHEBI:58349"/>
        <dbReference type="ChEBI" id="CHEBI:133309"/>
    </reaction>
    <physiologicalReaction direction="left-to-right" evidence="9">
        <dbReference type="Rhea" id="RHEA:50609"/>
    </physiologicalReaction>
</comment>
<comment type="catalytic activity">
    <reaction evidence="3">
        <text>20-hydroxy-leukotriene B4 + NADP(+) = 12-oxo-20-hydroxy-leukotriene B4 + NADPH + H(+)</text>
        <dbReference type="Rhea" id="RHEA:51208"/>
        <dbReference type="ChEBI" id="CHEBI:15378"/>
        <dbReference type="ChEBI" id="CHEBI:57460"/>
        <dbReference type="ChEBI" id="CHEBI:57783"/>
        <dbReference type="ChEBI" id="CHEBI:58349"/>
        <dbReference type="ChEBI" id="CHEBI:133346"/>
    </reaction>
    <physiologicalReaction direction="left-to-right" evidence="3">
        <dbReference type="Rhea" id="RHEA:51209"/>
    </physiologicalReaction>
</comment>
<comment type="catalytic activity">
    <reaction evidence="3">
        <text>6-trans-leukotriene B4 + NADP(+) = 12-oxo-(5S)-hydroxy-(6E,8E,10E,14Z)-eicosatetraenoate + NADPH + H(+)</text>
        <dbReference type="Rhea" id="RHEA:51204"/>
        <dbReference type="ChEBI" id="CHEBI:15378"/>
        <dbReference type="ChEBI" id="CHEBI:57783"/>
        <dbReference type="ChEBI" id="CHEBI:58349"/>
        <dbReference type="ChEBI" id="CHEBI:90723"/>
        <dbReference type="ChEBI" id="CHEBI:133974"/>
    </reaction>
    <physiologicalReaction direction="left-to-right" evidence="3">
        <dbReference type="Rhea" id="RHEA:51205"/>
    </physiologicalReaction>
</comment>
<comment type="catalytic activity">
    <reaction evidence="3">
        <text>(5S,12S)-dihydroxy-(6E,10E,12E,14Z)-eicosatetraenoate + NADP(+) = 12-oxo-(5S)-hydroxy-(6E,8E,10E,14Z)-eicosatetraenoate + NADPH + H(+)</text>
        <dbReference type="Rhea" id="RHEA:51212"/>
        <dbReference type="ChEBI" id="CHEBI:15378"/>
        <dbReference type="ChEBI" id="CHEBI:57783"/>
        <dbReference type="ChEBI" id="CHEBI:58349"/>
        <dbReference type="ChEBI" id="CHEBI:133974"/>
        <dbReference type="ChEBI" id="CHEBI:133975"/>
    </reaction>
    <physiologicalReaction direction="left-to-right" evidence="3">
        <dbReference type="Rhea" id="RHEA:51213"/>
    </physiologicalReaction>
</comment>
<comment type="catalytic activity">
    <reaction evidence="2">
        <text>an n-alkanal + NADP(+) = an alk-2-enal + NADPH + H(+)</text>
        <dbReference type="Rhea" id="RHEA:13737"/>
        <dbReference type="ChEBI" id="CHEBI:12834"/>
        <dbReference type="ChEBI" id="CHEBI:13757"/>
        <dbReference type="ChEBI" id="CHEBI:15378"/>
        <dbReference type="ChEBI" id="CHEBI:57783"/>
        <dbReference type="ChEBI" id="CHEBI:58349"/>
        <dbReference type="EC" id="1.3.1.74"/>
    </reaction>
    <physiologicalReaction direction="right-to-left" evidence="2">
        <dbReference type="Rhea" id="RHEA:13739"/>
    </physiologicalReaction>
</comment>
<comment type="catalytic activity">
    <reaction evidence="2">
        <text>hexanal + NADP(+) = (E)-hex-2-enal + NADPH + H(+)</text>
        <dbReference type="Rhea" id="RHEA:50776"/>
        <dbReference type="ChEBI" id="CHEBI:15378"/>
        <dbReference type="ChEBI" id="CHEBI:28913"/>
        <dbReference type="ChEBI" id="CHEBI:57783"/>
        <dbReference type="ChEBI" id="CHEBI:58349"/>
        <dbReference type="ChEBI" id="CHEBI:88528"/>
    </reaction>
    <physiologicalReaction direction="right-to-left" evidence="2">
        <dbReference type="Rhea" id="RHEA:50778"/>
    </physiologicalReaction>
</comment>
<comment type="catalytic activity">
    <reaction evidence="2">
        <text>octanal + NADP(+) = (2E)-octenal + NADPH + H(+)</text>
        <dbReference type="Rhea" id="RHEA:50780"/>
        <dbReference type="ChEBI" id="CHEBI:15378"/>
        <dbReference type="ChEBI" id="CHEBI:17935"/>
        <dbReference type="ChEBI" id="CHEBI:57783"/>
        <dbReference type="ChEBI" id="CHEBI:58349"/>
        <dbReference type="ChEBI" id="CHEBI:61748"/>
    </reaction>
    <physiologicalReaction direction="right-to-left" evidence="2">
        <dbReference type="Rhea" id="RHEA:50782"/>
    </physiologicalReaction>
</comment>
<comment type="catalytic activity">
    <reaction evidence="2">
        <text>decanal + NADP(+) = (2E)-decenal + NADPH + H(+)</text>
        <dbReference type="Rhea" id="RHEA:50612"/>
        <dbReference type="ChEBI" id="CHEBI:15378"/>
        <dbReference type="ChEBI" id="CHEBI:31457"/>
        <dbReference type="ChEBI" id="CHEBI:57783"/>
        <dbReference type="ChEBI" id="CHEBI:58349"/>
        <dbReference type="ChEBI" id="CHEBI:133455"/>
    </reaction>
    <physiologicalReaction direction="right-to-left" evidence="2">
        <dbReference type="Rhea" id="RHEA:50614"/>
    </physiologicalReaction>
</comment>
<comment type="catalytic activity">
    <reaction evidence="2">
        <text>dodecanal + NADP(+) = (2E)-dodecenal + NADPH + H(+)</text>
        <dbReference type="Rhea" id="RHEA:50784"/>
        <dbReference type="ChEBI" id="CHEBI:15378"/>
        <dbReference type="ChEBI" id="CHEBI:27836"/>
        <dbReference type="ChEBI" id="CHEBI:57783"/>
        <dbReference type="ChEBI" id="CHEBI:58349"/>
        <dbReference type="ChEBI" id="CHEBI:133741"/>
    </reaction>
    <physiologicalReaction direction="right-to-left" evidence="2">
        <dbReference type="Rhea" id="RHEA:50786"/>
    </physiologicalReaction>
</comment>
<comment type="catalytic activity">
    <reaction evidence="1">
        <text>4-hydroxynonanal + NADP(+) = (E)-4-hydroxynon-2-enal + NADPH + H(+)</text>
        <dbReference type="Rhea" id="RHEA:64736"/>
        <dbReference type="ChEBI" id="CHEBI:15378"/>
        <dbReference type="ChEBI" id="CHEBI:57783"/>
        <dbReference type="ChEBI" id="CHEBI:58349"/>
        <dbReference type="ChEBI" id="CHEBI:58968"/>
        <dbReference type="ChEBI" id="CHEBI:156112"/>
    </reaction>
    <physiologicalReaction direction="right-to-left" evidence="1">
        <dbReference type="Rhea" id="RHEA:64738"/>
    </physiologicalReaction>
</comment>
<comment type="catalytic activity">
    <reaction evidence="2">
        <text>pentan-2-one + NADP(+) = (E)-pent-3-en-2-one + NADPH + H(+)</text>
        <dbReference type="Rhea" id="RHEA:50788"/>
        <dbReference type="ChEBI" id="CHEBI:15378"/>
        <dbReference type="ChEBI" id="CHEBI:16472"/>
        <dbReference type="ChEBI" id="CHEBI:57783"/>
        <dbReference type="ChEBI" id="CHEBI:58349"/>
        <dbReference type="ChEBI" id="CHEBI:145276"/>
    </reaction>
    <physiologicalReaction direction="right-to-left" evidence="2">
        <dbReference type="Rhea" id="RHEA:50790"/>
    </physiologicalReaction>
</comment>
<comment type="catalytic activity">
    <reaction evidence="2">
        <text>nonan-2-one + NADP(+) = (3E)-nonen-2-one + NADPH + H(+)</text>
        <dbReference type="Rhea" id="RHEA:50616"/>
        <dbReference type="ChEBI" id="CHEBI:15378"/>
        <dbReference type="ChEBI" id="CHEBI:57783"/>
        <dbReference type="ChEBI" id="CHEBI:58349"/>
        <dbReference type="ChEBI" id="CHEBI:77927"/>
        <dbReference type="ChEBI" id="CHEBI:133457"/>
    </reaction>
    <physiologicalReaction direction="right-to-left" evidence="2">
        <dbReference type="Rhea" id="RHEA:50618"/>
    </physiologicalReaction>
</comment>
<comment type="biophysicochemical properties">
    <kinetics>
        <KM evidence="5">93 uM for LTB4</KM>
        <KM evidence="5">35 uM for 15-keto-PGE2</KM>
        <Vmax evidence="5">1.7 nmol/min/mg enzyme with LTB4 as substrate</Vmax>
        <Vmax evidence="5">345.0 nmol/min/mg enzyme with 15-keto-PGE2 as substrate</Vmax>
    </kinetics>
</comment>
<comment type="subunit">
    <text evidence="6">Monomer or homodimer.</text>
</comment>
<comment type="subcellular location">
    <subcellularLocation>
        <location evidence="5">Cytoplasm</location>
    </subcellularLocation>
</comment>
<comment type="tissue specificity">
    <text evidence="5">Detected in small intestine, kidney, liver, spleen and stomach (at protein level). Detected in small intestine, kidney and liver.</text>
</comment>
<comment type="similarity">
    <text evidence="8">Belongs to the NADP-dependent oxidoreductase L4BD family.</text>
</comment>
<accession>Q9EQZ5</accession>
<dbReference type="EC" id="1.3.1.48" evidence="5"/>
<dbReference type="EC" id="1.3.1.74" evidence="2"/>
<dbReference type="EMBL" id="AB021219">
    <property type="protein sequence ID" value="BAB20289.1"/>
    <property type="molecule type" value="mRNA"/>
</dbReference>
<dbReference type="RefSeq" id="NP_001166451.1">
    <property type="nucleotide sequence ID" value="NM_001172980.1"/>
</dbReference>
<dbReference type="RefSeq" id="XP_063103176.1">
    <property type="nucleotide sequence ID" value="XM_063247106.1"/>
</dbReference>
<dbReference type="RefSeq" id="XP_063103661.1">
    <property type="nucleotide sequence ID" value="XM_063247591.1"/>
</dbReference>
<dbReference type="PDB" id="1V3T">
    <property type="method" value="X-ray"/>
    <property type="resolution" value="2.30 A"/>
    <property type="chains" value="A/B=1-329"/>
</dbReference>
<dbReference type="PDB" id="1V3U">
    <property type="method" value="X-ray"/>
    <property type="resolution" value="2.00 A"/>
    <property type="chains" value="A/B=1-329"/>
</dbReference>
<dbReference type="PDB" id="1V3V">
    <property type="method" value="X-ray"/>
    <property type="resolution" value="2.00 A"/>
    <property type="chains" value="A/B=1-329"/>
</dbReference>
<dbReference type="PDB" id="2DM6">
    <property type="method" value="X-ray"/>
    <property type="resolution" value="2.00 A"/>
    <property type="chains" value="A/B=1-329"/>
</dbReference>
<dbReference type="PDBsum" id="1V3T"/>
<dbReference type="PDBsum" id="1V3U"/>
<dbReference type="PDBsum" id="1V3V"/>
<dbReference type="PDBsum" id="2DM6"/>
<dbReference type="SMR" id="Q9EQZ5"/>
<dbReference type="FunCoup" id="Q9EQZ5">
    <property type="interactions" value="449"/>
</dbReference>
<dbReference type="STRING" id="10141.ENSCPOP00000019699"/>
<dbReference type="GeneID" id="100135572"/>
<dbReference type="KEGG" id="cpoc:100135572"/>
<dbReference type="CTD" id="22949"/>
<dbReference type="InParanoid" id="Q9EQZ5"/>
<dbReference type="OrthoDB" id="809632at2759"/>
<dbReference type="EvolutionaryTrace" id="Q9EQZ5"/>
<dbReference type="Proteomes" id="UP000005447">
    <property type="component" value="Unassembled WGS sequence"/>
</dbReference>
<dbReference type="GO" id="GO:0005737">
    <property type="term" value="C:cytoplasm"/>
    <property type="evidence" value="ECO:0000250"/>
    <property type="project" value="UniProtKB"/>
</dbReference>
<dbReference type="GO" id="GO:0036185">
    <property type="term" value="F:13-lipoxin reductase activity"/>
    <property type="evidence" value="ECO:0000250"/>
    <property type="project" value="UniProtKB"/>
</dbReference>
<dbReference type="GO" id="GO:0047522">
    <property type="term" value="F:15-oxoprostaglandin 13-oxidase [NAD(P)+] activity"/>
    <property type="evidence" value="ECO:0000314"/>
    <property type="project" value="UniProtKB"/>
</dbReference>
<dbReference type="GO" id="GO:0035798">
    <property type="term" value="F:2-alkenal reductase (NADPH) activity"/>
    <property type="evidence" value="ECO:0000250"/>
    <property type="project" value="UniProtKB"/>
</dbReference>
<dbReference type="GO" id="GO:0097257">
    <property type="term" value="F:leukotriene B4 12-hydroxy dehydrogenase activity"/>
    <property type="evidence" value="ECO:0000314"/>
    <property type="project" value="UniProtKB"/>
</dbReference>
<dbReference type="GO" id="GO:0036102">
    <property type="term" value="P:leukotriene B4 metabolic process"/>
    <property type="evidence" value="ECO:0000314"/>
    <property type="project" value="UniProtKB"/>
</dbReference>
<dbReference type="GO" id="GO:2001302">
    <property type="term" value="P:lipoxin A4 metabolic process"/>
    <property type="evidence" value="ECO:0000250"/>
    <property type="project" value="UniProtKB"/>
</dbReference>
<dbReference type="GO" id="GO:0006693">
    <property type="term" value="P:prostaglandin metabolic process"/>
    <property type="evidence" value="ECO:0000314"/>
    <property type="project" value="UniProtKB"/>
</dbReference>
<dbReference type="CDD" id="cd08294">
    <property type="entry name" value="leukotriene_B4_DH_like"/>
    <property type="match status" value="1"/>
</dbReference>
<dbReference type="FunFam" id="3.40.50.720:FF:000121">
    <property type="entry name" value="Prostaglandin reductase 2"/>
    <property type="match status" value="1"/>
</dbReference>
<dbReference type="Gene3D" id="3.90.180.10">
    <property type="entry name" value="Medium-chain alcohol dehydrogenases, catalytic domain"/>
    <property type="match status" value="1"/>
</dbReference>
<dbReference type="Gene3D" id="3.40.50.720">
    <property type="entry name" value="NAD(P)-binding Rossmann-like Domain"/>
    <property type="match status" value="1"/>
</dbReference>
<dbReference type="InterPro" id="IPR013149">
    <property type="entry name" value="ADH-like_C"/>
</dbReference>
<dbReference type="InterPro" id="IPR041694">
    <property type="entry name" value="ADH_N_2"/>
</dbReference>
<dbReference type="InterPro" id="IPR011032">
    <property type="entry name" value="GroES-like_sf"/>
</dbReference>
<dbReference type="InterPro" id="IPR045010">
    <property type="entry name" value="MDR_fam"/>
</dbReference>
<dbReference type="InterPro" id="IPR036291">
    <property type="entry name" value="NAD(P)-bd_dom_sf"/>
</dbReference>
<dbReference type="InterPro" id="IPR020843">
    <property type="entry name" value="PKS_ER"/>
</dbReference>
<dbReference type="InterPro" id="IPR014190">
    <property type="entry name" value="PTGR1"/>
</dbReference>
<dbReference type="NCBIfam" id="TIGR02825">
    <property type="entry name" value="B4_12hDH"/>
    <property type="match status" value="1"/>
</dbReference>
<dbReference type="PANTHER" id="PTHR43205">
    <property type="entry name" value="PROSTAGLANDIN REDUCTASE"/>
    <property type="match status" value="1"/>
</dbReference>
<dbReference type="PANTHER" id="PTHR43205:SF7">
    <property type="entry name" value="PROSTAGLANDIN REDUCTASE 1"/>
    <property type="match status" value="1"/>
</dbReference>
<dbReference type="Pfam" id="PF16884">
    <property type="entry name" value="ADH_N_2"/>
    <property type="match status" value="1"/>
</dbReference>
<dbReference type="Pfam" id="PF00107">
    <property type="entry name" value="ADH_zinc_N"/>
    <property type="match status" value="1"/>
</dbReference>
<dbReference type="SMART" id="SM00829">
    <property type="entry name" value="PKS_ER"/>
    <property type="match status" value="1"/>
</dbReference>
<dbReference type="SUPFAM" id="SSF50129">
    <property type="entry name" value="GroES-like"/>
    <property type="match status" value="2"/>
</dbReference>
<dbReference type="SUPFAM" id="SSF51735">
    <property type="entry name" value="NAD(P)-binding Rossmann-fold domains"/>
    <property type="match status" value="1"/>
</dbReference>
<reference key="1">
    <citation type="journal article" date="2001" name="Eur. J. Biochem.">
        <title>Immunohistochemical localization of guinea-pig leukotriene B4 12-hydroxydehydrogenase/15-ketoprostaglandin 13-reductase.</title>
        <authorList>
            <person name="Yamamoto T."/>
            <person name="Yokomizo T."/>
            <person name="Nakao A."/>
            <person name="Izumi T."/>
            <person name="Shimizu T."/>
        </authorList>
    </citation>
    <scope>NUCLEOTIDE SEQUENCE [MRNA]</scope>
    <scope>FUNCTION</scope>
    <scope>CATALYTIC ACTIVITY</scope>
    <scope>BIOPHYSICOCHEMICAL PROPERTIES</scope>
    <scope>SUBCELLULAR LOCATION</scope>
    <scope>TISSUE SPECIFICITY</scope>
    <source>
        <tissue>Liver</tissue>
    </source>
</reference>
<reference key="2">
    <citation type="journal article" date="2004" name="J. Biol. Chem.">
        <title>Structural basis of leukotriene B4 12-hydroxydehydrogenase/15-oxo-prostaglandin 13-reductase catalytic mechanism and a possible Src homology 3 domain binding loop.</title>
        <authorList>
            <person name="Hori T."/>
            <person name="Yokomizo T."/>
            <person name="Ago H."/>
            <person name="Sugahara M."/>
            <person name="Ueno G."/>
            <person name="Yamamoto M."/>
            <person name="Kumasaka T."/>
            <person name="Shimizu T."/>
            <person name="Miyano M."/>
        </authorList>
    </citation>
    <scope>X-RAY CRYSTALLOGRAPHY (2.0 ANGSTROMS) OF APOENZYME AND IN COMPLEX WITH NADP AND SUBSTRATE</scope>
</reference>
<feature type="chain" id="PRO_0000218064" description="Prostaglandin reductase 1">
    <location>
        <begin position="1"/>
        <end position="329"/>
    </location>
</feature>
<feature type="binding site" evidence="6">
    <location>
        <begin position="152"/>
        <end position="155"/>
    </location>
    <ligand>
        <name>NADP(+)</name>
        <dbReference type="ChEBI" id="CHEBI:58349"/>
    </ligand>
</feature>
<feature type="binding site" evidence="6">
    <location>
        <position position="178"/>
    </location>
    <ligand>
        <name>NADP(+)</name>
        <dbReference type="ChEBI" id="CHEBI:58349"/>
    </ligand>
</feature>
<feature type="binding site" evidence="6">
    <location>
        <position position="193"/>
    </location>
    <ligand>
        <name>NADP(+)</name>
        <dbReference type="ChEBI" id="CHEBI:58349"/>
    </ligand>
</feature>
<feature type="binding site" evidence="6">
    <location>
        <position position="217"/>
    </location>
    <ligand>
        <name>NADP(+)</name>
        <dbReference type="ChEBI" id="CHEBI:58349"/>
    </ligand>
</feature>
<feature type="binding site" evidence="6">
    <location>
        <begin position="239"/>
        <end position="245"/>
    </location>
    <ligand>
        <name>NADP(+)</name>
        <dbReference type="ChEBI" id="CHEBI:58349"/>
    </ligand>
</feature>
<feature type="binding site" evidence="6">
    <location>
        <begin position="270"/>
        <end position="272"/>
    </location>
    <ligand>
        <name>NADP(+)</name>
        <dbReference type="ChEBI" id="CHEBI:58349"/>
    </ligand>
</feature>
<feature type="binding site" evidence="6">
    <location>
        <position position="321"/>
    </location>
    <ligand>
        <name>NADP(+)</name>
        <dbReference type="ChEBI" id="CHEBI:58349"/>
    </ligand>
</feature>
<feature type="modified residue" description="Phosphothreonine" evidence="2">
    <location>
        <position position="18"/>
    </location>
</feature>
<feature type="modified residue" description="Phosphoserine" evidence="2">
    <location>
        <position position="20"/>
    </location>
</feature>
<feature type="modified residue" description="N6-(2-hydroxyisobutyryl)lysine; alternate" evidence="2">
    <location>
        <position position="178"/>
    </location>
</feature>
<feature type="modified residue" description="N6-acetyllysine; alternate" evidence="4">
    <location>
        <position position="178"/>
    </location>
</feature>
<feature type="strand" evidence="11">
    <location>
        <begin position="3"/>
        <end position="9"/>
    </location>
</feature>
<feature type="strand" evidence="10">
    <location>
        <begin position="14"/>
        <end position="16"/>
    </location>
</feature>
<feature type="helix" evidence="11">
    <location>
        <begin position="19"/>
        <end position="21"/>
    </location>
</feature>
<feature type="strand" evidence="11">
    <location>
        <begin position="22"/>
        <end position="28"/>
    </location>
</feature>
<feature type="strand" evidence="11">
    <location>
        <begin position="37"/>
        <end position="45"/>
    </location>
</feature>
<feature type="helix" evidence="11">
    <location>
        <begin position="49"/>
        <end position="53"/>
    </location>
</feature>
<feature type="turn" evidence="11">
    <location>
        <begin position="54"/>
        <end position="56"/>
    </location>
</feature>
<feature type="strand" evidence="11">
    <location>
        <begin position="67"/>
        <end position="75"/>
    </location>
</feature>
<feature type="strand" evidence="11">
    <location>
        <begin position="84"/>
        <end position="87"/>
    </location>
</feature>
<feature type="strand" evidence="11">
    <location>
        <begin position="91"/>
        <end position="99"/>
    </location>
</feature>
<feature type="strand" evidence="11">
    <location>
        <begin position="102"/>
        <end position="104"/>
    </location>
</feature>
<feature type="helix" evidence="11">
    <location>
        <begin position="115"/>
        <end position="119"/>
    </location>
</feature>
<feature type="turn" evidence="11">
    <location>
        <begin position="120"/>
        <end position="122"/>
    </location>
</feature>
<feature type="helix" evidence="11">
    <location>
        <begin position="124"/>
        <end position="134"/>
    </location>
</feature>
<feature type="turn" evidence="12">
    <location>
        <begin position="135"/>
        <end position="137"/>
    </location>
</feature>
<feature type="strand" evidence="11">
    <location>
        <begin position="144"/>
        <end position="149"/>
    </location>
</feature>
<feature type="helix" evidence="11">
    <location>
        <begin position="153"/>
        <end position="164"/>
    </location>
</feature>
<feature type="strand" evidence="11">
    <location>
        <begin position="168"/>
        <end position="175"/>
    </location>
</feature>
<feature type="helix" evidence="11">
    <location>
        <begin position="176"/>
        <end position="184"/>
    </location>
</feature>
<feature type="strand" evidence="11">
    <location>
        <begin position="188"/>
        <end position="192"/>
    </location>
</feature>
<feature type="turn" evidence="10">
    <location>
        <begin position="193"/>
        <end position="195"/>
    </location>
</feature>
<feature type="helix" evidence="11">
    <location>
        <begin position="199"/>
        <end position="206"/>
    </location>
</feature>
<feature type="strand" evidence="11">
    <location>
        <begin position="211"/>
        <end position="218"/>
    </location>
</feature>
<feature type="helix" evidence="11">
    <location>
        <begin position="220"/>
        <end position="227"/>
    </location>
</feature>
<feature type="strand" evidence="11">
    <location>
        <begin position="230"/>
        <end position="238"/>
    </location>
</feature>
<feature type="turn" evidence="11">
    <location>
        <begin position="244"/>
        <end position="246"/>
    </location>
</feature>
<feature type="helix" evidence="11">
    <location>
        <begin position="257"/>
        <end position="262"/>
    </location>
</feature>
<feature type="strand" evidence="11">
    <location>
        <begin position="266"/>
        <end position="269"/>
    </location>
</feature>
<feature type="helix" evidence="11">
    <location>
        <begin position="272"/>
        <end position="274"/>
    </location>
</feature>
<feature type="helix" evidence="11">
    <location>
        <begin position="278"/>
        <end position="292"/>
    </location>
</feature>
<feature type="strand" evidence="11">
    <location>
        <begin position="300"/>
        <end position="304"/>
    </location>
</feature>
<feature type="helix" evidence="11">
    <location>
        <begin position="306"/>
        <end position="308"/>
    </location>
</feature>
<feature type="helix" evidence="11">
    <location>
        <begin position="309"/>
        <end position="317"/>
    </location>
</feature>
<feature type="strand" evidence="11">
    <location>
        <begin position="322"/>
        <end position="328"/>
    </location>
</feature>
<proteinExistence type="evidence at protein level"/>